<name>QUEC_BURCJ</name>
<comment type="function">
    <text evidence="1">Catalyzes the ATP-dependent conversion of 7-carboxy-7-deazaguanine (CDG) to 7-cyano-7-deazaguanine (preQ(0)).</text>
</comment>
<comment type="catalytic activity">
    <reaction evidence="1">
        <text>7-carboxy-7-deazaguanine + NH4(+) + ATP = 7-cyano-7-deazaguanine + ADP + phosphate + H2O + H(+)</text>
        <dbReference type="Rhea" id="RHEA:27982"/>
        <dbReference type="ChEBI" id="CHEBI:15377"/>
        <dbReference type="ChEBI" id="CHEBI:15378"/>
        <dbReference type="ChEBI" id="CHEBI:28938"/>
        <dbReference type="ChEBI" id="CHEBI:30616"/>
        <dbReference type="ChEBI" id="CHEBI:43474"/>
        <dbReference type="ChEBI" id="CHEBI:45075"/>
        <dbReference type="ChEBI" id="CHEBI:61036"/>
        <dbReference type="ChEBI" id="CHEBI:456216"/>
        <dbReference type="EC" id="6.3.4.20"/>
    </reaction>
</comment>
<comment type="cofactor">
    <cofactor evidence="1">
        <name>Zn(2+)</name>
        <dbReference type="ChEBI" id="CHEBI:29105"/>
    </cofactor>
    <text evidence="1">Binds 1 zinc ion per subunit.</text>
</comment>
<comment type="pathway">
    <text evidence="1">Purine metabolism; 7-cyano-7-deazaguanine biosynthesis.</text>
</comment>
<comment type="similarity">
    <text evidence="1">Belongs to the QueC family.</text>
</comment>
<evidence type="ECO:0000255" key="1">
    <source>
        <dbReference type="HAMAP-Rule" id="MF_01633"/>
    </source>
</evidence>
<organism>
    <name type="scientific">Burkholderia cenocepacia (strain ATCC BAA-245 / DSM 16553 / LMG 16656 / NCTC 13227 / J2315 / CF5610)</name>
    <name type="common">Burkholderia cepacia (strain J2315)</name>
    <dbReference type="NCBI Taxonomy" id="216591"/>
    <lineage>
        <taxon>Bacteria</taxon>
        <taxon>Pseudomonadati</taxon>
        <taxon>Pseudomonadota</taxon>
        <taxon>Betaproteobacteria</taxon>
        <taxon>Burkholderiales</taxon>
        <taxon>Burkholderiaceae</taxon>
        <taxon>Burkholderia</taxon>
        <taxon>Burkholderia cepacia complex</taxon>
    </lineage>
</organism>
<reference key="1">
    <citation type="journal article" date="2009" name="J. Bacteriol.">
        <title>The genome of Burkholderia cenocepacia J2315, an epidemic pathogen of cystic fibrosis patients.</title>
        <authorList>
            <person name="Holden M.T."/>
            <person name="Seth-Smith H.M."/>
            <person name="Crossman L.C."/>
            <person name="Sebaihia M."/>
            <person name="Bentley S.D."/>
            <person name="Cerdeno-Tarraga A.M."/>
            <person name="Thomson N.R."/>
            <person name="Bason N."/>
            <person name="Quail M.A."/>
            <person name="Sharp S."/>
            <person name="Cherevach I."/>
            <person name="Churcher C."/>
            <person name="Goodhead I."/>
            <person name="Hauser H."/>
            <person name="Holroyd N."/>
            <person name="Mungall K."/>
            <person name="Scott P."/>
            <person name="Walker D."/>
            <person name="White B."/>
            <person name="Rose H."/>
            <person name="Iversen P."/>
            <person name="Mil-Homens D."/>
            <person name="Rocha E.P."/>
            <person name="Fialho A.M."/>
            <person name="Baldwin A."/>
            <person name="Dowson C."/>
            <person name="Barrell B.G."/>
            <person name="Govan J.R."/>
            <person name="Vandamme P."/>
            <person name="Hart C.A."/>
            <person name="Mahenthiralingam E."/>
            <person name="Parkhill J."/>
        </authorList>
    </citation>
    <scope>NUCLEOTIDE SEQUENCE [LARGE SCALE GENOMIC DNA]</scope>
    <source>
        <strain>ATCC BAA-245 / DSM 16553 / LMG 16656 / NCTC 13227 / J2315 / CF5610</strain>
    </source>
</reference>
<gene>
    <name evidence="1" type="primary">queC</name>
    <name type="ordered locus">BceJ2315_04710</name>
    <name type="ORF">BCAL0473</name>
</gene>
<proteinExistence type="inferred from homology"/>
<keyword id="KW-0067">ATP-binding</keyword>
<keyword id="KW-0436">Ligase</keyword>
<keyword id="KW-0479">Metal-binding</keyword>
<keyword id="KW-0547">Nucleotide-binding</keyword>
<keyword id="KW-0671">Queuosine biosynthesis</keyword>
<keyword id="KW-0862">Zinc</keyword>
<accession>B4E7W5</accession>
<feature type="chain" id="PRO_1000186566" description="7-cyano-7-deazaguanine synthase">
    <location>
        <begin position="1"/>
        <end position="244"/>
    </location>
</feature>
<feature type="binding site" evidence="1">
    <location>
        <begin position="14"/>
        <end position="24"/>
    </location>
    <ligand>
        <name>ATP</name>
        <dbReference type="ChEBI" id="CHEBI:30616"/>
    </ligand>
</feature>
<feature type="binding site" evidence="1">
    <location>
        <position position="202"/>
    </location>
    <ligand>
        <name>Zn(2+)</name>
        <dbReference type="ChEBI" id="CHEBI:29105"/>
    </ligand>
</feature>
<feature type="binding site" evidence="1">
    <location>
        <position position="217"/>
    </location>
    <ligand>
        <name>Zn(2+)</name>
        <dbReference type="ChEBI" id="CHEBI:29105"/>
    </ligand>
</feature>
<feature type="binding site" evidence="1">
    <location>
        <position position="220"/>
    </location>
    <ligand>
        <name>Zn(2+)</name>
        <dbReference type="ChEBI" id="CHEBI:29105"/>
    </ligand>
</feature>
<feature type="binding site" evidence="1">
    <location>
        <position position="223"/>
    </location>
    <ligand>
        <name>Zn(2+)</name>
        <dbReference type="ChEBI" id="CHEBI:29105"/>
    </ligand>
</feature>
<dbReference type="EC" id="6.3.4.20" evidence="1"/>
<dbReference type="EMBL" id="AM747720">
    <property type="protein sequence ID" value="CAR50784.1"/>
    <property type="molecule type" value="Genomic_DNA"/>
</dbReference>
<dbReference type="RefSeq" id="WP_006482568.1">
    <property type="nucleotide sequence ID" value="NC_011000.1"/>
</dbReference>
<dbReference type="SMR" id="B4E7W5"/>
<dbReference type="GeneID" id="56559711"/>
<dbReference type="KEGG" id="bcj:BCAL0473"/>
<dbReference type="eggNOG" id="COG0603">
    <property type="taxonomic scope" value="Bacteria"/>
</dbReference>
<dbReference type="HOGENOM" id="CLU_081854_0_0_4"/>
<dbReference type="BioCyc" id="BCEN216591:G1G1V-541-MONOMER"/>
<dbReference type="UniPathway" id="UPA00391"/>
<dbReference type="Proteomes" id="UP000001035">
    <property type="component" value="Chromosome 1"/>
</dbReference>
<dbReference type="GO" id="GO:0005524">
    <property type="term" value="F:ATP binding"/>
    <property type="evidence" value="ECO:0007669"/>
    <property type="project" value="UniProtKB-UniRule"/>
</dbReference>
<dbReference type="GO" id="GO:0016879">
    <property type="term" value="F:ligase activity, forming carbon-nitrogen bonds"/>
    <property type="evidence" value="ECO:0007669"/>
    <property type="project" value="UniProtKB-UniRule"/>
</dbReference>
<dbReference type="GO" id="GO:0008270">
    <property type="term" value="F:zinc ion binding"/>
    <property type="evidence" value="ECO:0007669"/>
    <property type="project" value="UniProtKB-UniRule"/>
</dbReference>
<dbReference type="GO" id="GO:0008616">
    <property type="term" value="P:queuosine biosynthetic process"/>
    <property type="evidence" value="ECO:0007669"/>
    <property type="project" value="UniProtKB-UniRule"/>
</dbReference>
<dbReference type="CDD" id="cd01995">
    <property type="entry name" value="QueC-like"/>
    <property type="match status" value="1"/>
</dbReference>
<dbReference type="Gene3D" id="3.40.50.620">
    <property type="entry name" value="HUPs"/>
    <property type="match status" value="1"/>
</dbReference>
<dbReference type="HAMAP" id="MF_01633">
    <property type="entry name" value="QueC"/>
    <property type="match status" value="1"/>
</dbReference>
<dbReference type="InterPro" id="IPR018317">
    <property type="entry name" value="QueC"/>
</dbReference>
<dbReference type="InterPro" id="IPR014729">
    <property type="entry name" value="Rossmann-like_a/b/a_fold"/>
</dbReference>
<dbReference type="NCBIfam" id="TIGR00364">
    <property type="entry name" value="7-cyano-7-deazaguanine synthase QueC"/>
    <property type="match status" value="1"/>
</dbReference>
<dbReference type="PANTHER" id="PTHR42914">
    <property type="entry name" value="7-CYANO-7-DEAZAGUANINE SYNTHASE"/>
    <property type="match status" value="1"/>
</dbReference>
<dbReference type="PANTHER" id="PTHR42914:SF1">
    <property type="entry name" value="7-CYANO-7-DEAZAGUANINE SYNTHASE"/>
    <property type="match status" value="1"/>
</dbReference>
<dbReference type="Pfam" id="PF06508">
    <property type="entry name" value="QueC"/>
    <property type="match status" value="1"/>
</dbReference>
<dbReference type="PIRSF" id="PIRSF006293">
    <property type="entry name" value="ExsB"/>
    <property type="match status" value="1"/>
</dbReference>
<dbReference type="SUPFAM" id="SSF52402">
    <property type="entry name" value="Adenine nucleotide alpha hydrolases-like"/>
    <property type="match status" value="1"/>
</dbReference>
<sequence>MIRTDAKDGALVLFSGGQDSATCVAWALERYQTVETLGFDYGQRHRVELECREGVREALKHRFPAWSDRLGDDHMIDLSVLGAISDTAMTRTIEIETTANGLPNTFVPGRNLMFMTIAAAIAYRRGLRVLVGGMCETDFSGYPDCRDDTMKALQVALNLGMDTRMVLETPLMWLDKAQTWQLAEQLGGDALVELIRVETHTCYVGERAELHDWGFGCGECPACKLRKRGYEAYLKGERVTEAPL</sequence>
<protein>
    <recommendedName>
        <fullName evidence="1">7-cyano-7-deazaguanine synthase</fullName>
        <ecNumber evidence="1">6.3.4.20</ecNumber>
    </recommendedName>
    <alternativeName>
        <fullName evidence="1">7-cyano-7-carbaguanine synthase</fullName>
    </alternativeName>
    <alternativeName>
        <fullName evidence="1">PreQ(0) synthase</fullName>
    </alternativeName>
    <alternativeName>
        <fullName evidence="1">Queuosine biosynthesis protein QueC</fullName>
    </alternativeName>
</protein>